<gene>
    <name type="primary">Stab1</name>
    <name type="synonym">Feel1</name>
</gene>
<accession>Q8R4Y4</accession>
<accession>Q8K0K6</accession>
<accession>Q8VC09</accession>
<protein>
    <recommendedName>
        <fullName>Stabilin-1</fullName>
    </recommendedName>
    <alternativeName>
        <fullName>Fasciclin, EGF-like, laminin-type EGF-like and link domain-containing scavenger receptor 1</fullName>
        <shortName>FEEL-1</shortName>
    </alternativeName>
</protein>
<feature type="signal peptide" evidence="2">
    <location>
        <begin position="1"/>
        <end position="25"/>
    </location>
</feature>
<feature type="chain" id="PRO_0000007711" description="Stabilin-1">
    <location>
        <begin position="26"/>
        <end position="2571"/>
    </location>
</feature>
<feature type="topological domain" description="Extracellular" evidence="2">
    <location>
        <begin position="26"/>
        <end position="2475"/>
    </location>
</feature>
<feature type="transmembrane region" description="Helical" evidence="2">
    <location>
        <begin position="2476"/>
        <end position="2496"/>
    </location>
</feature>
<feature type="topological domain" description="Cytoplasmic" evidence="2">
    <location>
        <begin position="2497"/>
        <end position="2571"/>
    </location>
</feature>
<feature type="domain" description="EGF-like 1" evidence="3 7">
    <location>
        <begin position="111"/>
        <end position="149"/>
    </location>
</feature>
<feature type="domain" description="EGF-like 2" evidence="3 7">
    <location>
        <begin position="157"/>
        <end position="194"/>
    </location>
</feature>
<feature type="domain" description="EGF-like 3" evidence="3 7">
    <location>
        <begin position="196"/>
        <end position="232"/>
    </location>
</feature>
<feature type="domain" description="EGF-like 4" evidence="3 7">
    <location>
        <begin position="233"/>
        <end position="272"/>
    </location>
</feature>
<feature type="domain" description="FAS1 1" evidence="4 7">
    <location>
        <begin position="357"/>
        <end position="495"/>
    </location>
</feature>
<feature type="domain" description="FAS1 2" evidence="4 7">
    <location>
        <begin position="507"/>
        <end position="642"/>
    </location>
</feature>
<feature type="domain" description="EGF-like 5" evidence="3 7">
    <location>
        <begin position="729"/>
        <end position="769"/>
    </location>
</feature>
<feature type="domain" description="EGF-like 6" evidence="3 7">
    <location>
        <begin position="819"/>
        <end position="859"/>
    </location>
</feature>
<feature type="domain" description="EGF-like 7" evidence="3 7">
    <location>
        <begin position="862"/>
        <end position="904"/>
    </location>
</feature>
<feature type="domain" description="EGF-like 8" evidence="3 7">
    <location>
        <begin position="905"/>
        <end position="947"/>
    </location>
</feature>
<feature type="domain" description="EGF-like 9" evidence="3 7">
    <location>
        <begin position="948"/>
        <end position="987"/>
    </location>
</feature>
<feature type="domain" description="FAS1 3" evidence="4 7">
    <location>
        <begin position="989"/>
        <end position="1119"/>
    </location>
</feature>
<feature type="domain" description="FAS1 4" evidence="4 7">
    <location>
        <begin position="1129"/>
        <end position="1254"/>
    </location>
</feature>
<feature type="domain" description="Laminin EGF-like 1" evidence="7">
    <location>
        <begin position="1328"/>
        <end position="1393"/>
    </location>
</feature>
<feature type="domain" description="EGF-like 10" evidence="3 7">
    <location>
        <begin position="1417"/>
        <end position="1455"/>
    </location>
</feature>
<feature type="domain" description="EGF-like 11" evidence="3 7">
    <location>
        <begin position="1456"/>
        <end position="1497"/>
    </location>
</feature>
<feature type="domain" description="EGF-like 12" evidence="3 7">
    <location>
        <begin position="1498"/>
        <end position="1540"/>
    </location>
</feature>
<feature type="domain" description="EGF-like 13" evidence="3 7">
    <location>
        <begin position="1541"/>
        <end position="1583"/>
    </location>
</feature>
<feature type="domain" description="FAS1 5" evidence="4 7">
    <location>
        <begin position="1583"/>
        <end position="1709"/>
    </location>
</feature>
<feature type="domain" description="FAS1 6" evidence="4 7">
    <location>
        <begin position="1725"/>
        <end position="1865"/>
    </location>
</feature>
<feature type="domain" description="Laminin EGF-like 2" evidence="7">
    <location>
        <begin position="1966"/>
        <end position="2031"/>
    </location>
</feature>
<feature type="domain" description="EGF-like 14" evidence="3 7">
    <location>
        <begin position="2056"/>
        <end position="2090"/>
    </location>
</feature>
<feature type="domain" description="EGF-like 15" evidence="3 7">
    <location>
        <begin position="2091"/>
        <end position="2131"/>
    </location>
</feature>
<feature type="domain" description="EGF-like 16" evidence="3 7">
    <location>
        <begin position="2132"/>
        <end position="2174"/>
    </location>
</feature>
<feature type="domain" description="Link" evidence="5 7">
    <location>
        <begin position="2208"/>
        <end position="2301"/>
    </location>
</feature>
<feature type="domain" description="FAS1 7" evidence="4 7">
    <location>
        <begin position="2322"/>
        <end position="2459"/>
    </location>
</feature>
<feature type="glycosylation site" description="N-linked (GlcNAc...) asparagine" evidence="2">
    <location>
        <position position="134"/>
    </location>
</feature>
<feature type="glycosylation site" description="N-linked (GlcNAc...) asparagine" evidence="2">
    <location>
        <position position="142"/>
    </location>
</feature>
<feature type="glycosylation site" description="N-linked (GlcNAc...) asparagine" evidence="2">
    <location>
        <position position="287"/>
    </location>
</feature>
<feature type="glycosylation site" description="N-linked (GlcNAc...) asparagine" evidence="2">
    <location>
        <position position="313"/>
    </location>
</feature>
<feature type="glycosylation site" description="N-linked (GlcNAc...) asparagine" evidence="2">
    <location>
        <position position="416"/>
    </location>
</feature>
<feature type="glycosylation site" description="N-linked (GlcNAc...) asparagine" evidence="2">
    <location>
        <position position="607"/>
    </location>
</feature>
<feature type="glycosylation site" description="N-linked (GlcNAc...) asparagine" evidence="2">
    <location>
        <position position="674"/>
    </location>
</feature>
<feature type="glycosylation site" description="N-linked (GlcNAc...) asparagine" evidence="2">
    <location>
        <position position="713"/>
    </location>
</feature>
<feature type="glycosylation site" description="N-linked (GlcNAc...) asparagine" evidence="2">
    <location>
        <position position="746"/>
    </location>
</feature>
<feature type="glycosylation site" description="N-linked (GlcNAc...) asparagine" evidence="2">
    <location>
        <position position="817"/>
    </location>
</feature>
<feature type="glycosylation site" description="N-linked (GlcNAc...) asparagine" evidence="2">
    <location>
        <position position="1011"/>
    </location>
</feature>
<feature type="glycosylation site" description="N-linked (GlcNAc...) asparagine" evidence="2">
    <location>
        <position position="1088"/>
    </location>
</feature>
<feature type="glycosylation site" description="N-linked (GlcNAc...) asparagine" evidence="2">
    <location>
        <position position="1097"/>
    </location>
</feature>
<feature type="glycosylation site" description="N-linked (GlcNAc...) asparagine" evidence="2">
    <location>
        <position position="1171"/>
    </location>
</feature>
<feature type="glycosylation site" description="N-linked (GlcNAc...) asparagine" evidence="2">
    <location>
        <position position="1179"/>
    </location>
</feature>
<feature type="glycosylation site" description="N-linked (GlcNAc...) asparagine" evidence="2">
    <location>
        <position position="1223"/>
    </location>
</feature>
<feature type="glycosylation site" description="N-linked (GlcNAc...) asparagine" evidence="2">
    <location>
        <position position="1275"/>
    </location>
</feature>
<feature type="glycosylation site" description="N-linked (GlcNAc...) asparagine" evidence="2">
    <location>
        <position position="1398"/>
    </location>
</feature>
<feature type="glycosylation site" description="N-linked (GlcNAc...) asparagine" evidence="2">
    <location>
        <position position="1450"/>
    </location>
</feature>
<feature type="glycosylation site" description="N-linked (GlcNAc...) asparagine" evidence="2">
    <location>
        <position position="1472"/>
    </location>
</feature>
<feature type="glycosylation site" description="N-linked (GlcNAc...) asparagine" evidence="2">
    <location>
        <position position="1627"/>
    </location>
</feature>
<feature type="glycosylation site" description="N-linked (GlcNAc...) asparagine" evidence="2">
    <location>
        <position position="1728"/>
    </location>
</feature>
<feature type="glycosylation site" description="N-linked (GlcNAc...) asparagine" evidence="2">
    <location>
        <position position="2107"/>
    </location>
</feature>
<feature type="glycosylation site" description="N-linked (GlcNAc...) asparagine" evidence="2">
    <location>
        <position position="2261"/>
    </location>
</feature>
<feature type="glycosylation site" description="N-linked (GlcNAc...) asparagine" evidence="2">
    <location>
        <position position="2290"/>
    </location>
</feature>
<feature type="glycosylation site" description="N-linked (GlcNAc...) asparagine" evidence="2">
    <location>
        <position position="2334"/>
    </location>
</feature>
<feature type="glycosylation site" description="N-linked (GlcNAc...) asparagine" evidence="2">
    <location>
        <position position="2347"/>
    </location>
</feature>
<feature type="glycosylation site" description="N-linked (GlcNAc...) asparagine" evidence="2">
    <location>
        <position position="2379"/>
    </location>
</feature>
<feature type="glycosylation site" description="N-linked (GlcNAc...) asparagine" evidence="2">
    <location>
        <position position="2393"/>
    </location>
</feature>
<feature type="glycosylation site" description="N-linked (GlcNAc...) asparagine" evidence="2">
    <location>
        <position position="2400"/>
    </location>
</feature>
<feature type="glycosylation site" description="N-linked (GlcNAc...) asparagine" evidence="2">
    <location>
        <position position="2424"/>
    </location>
</feature>
<feature type="disulfide bond" evidence="1">
    <location>
        <begin position="113"/>
        <end position="127"/>
    </location>
</feature>
<feature type="disulfide bond" evidence="1">
    <location>
        <begin position="121"/>
        <end position="137"/>
    </location>
</feature>
<feature type="disulfide bond" evidence="1">
    <location>
        <begin position="139"/>
        <end position="148"/>
    </location>
</feature>
<feature type="disulfide bond" evidence="1">
    <location>
        <begin position="161"/>
        <end position="172"/>
    </location>
</feature>
<feature type="disulfide bond" evidence="1">
    <location>
        <begin position="165"/>
        <end position="182"/>
    </location>
</feature>
<feature type="disulfide bond" evidence="1">
    <location>
        <begin position="184"/>
        <end position="193"/>
    </location>
</feature>
<feature type="disulfide bond" evidence="1">
    <location>
        <begin position="200"/>
        <end position="211"/>
    </location>
</feature>
<feature type="disulfide bond" evidence="1">
    <location>
        <begin position="205"/>
        <end position="218"/>
    </location>
</feature>
<feature type="disulfide bond" evidence="1">
    <location>
        <begin position="220"/>
        <end position="231"/>
    </location>
</feature>
<feature type="disulfide bond" evidence="1">
    <location>
        <begin position="237"/>
        <end position="248"/>
    </location>
</feature>
<feature type="disulfide bond" evidence="1">
    <location>
        <begin position="242"/>
        <end position="258"/>
    </location>
</feature>
<feature type="disulfide bond" evidence="1">
    <location>
        <begin position="260"/>
        <end position="271"/>
    </location>
</feature>
<feature type="disulfide bond" evidence="1">
    <location>
        <begin position="733"/>
        <end position="747"/>
    </location>
</feature>
<feature type="disulfide bond" evidence="1">
    <location>
        <begin position="741"/>
        <end position="757"/>
    </location>
</feature>
<feature type="disulfide bond" evidence="1">
    <location>
        <begin position="759"/>
        <end position="768"/>
    </location>
</feature>
<feature type="disulfide bond" evidence="1">
    <location>
        <begin position="823"/>
        <end position="838"/>
    </location>
</feature>
<feature type="disulfide bond" evidence="1">
    <location>
        <begin position="832"/>
        <end position="847"/>
    </location>
</feature>
<feature type="disulfide bond" evidence="1">
    <location>
        <begin position="866"/>
        <end position="880"/>
    </location>
</feature>
<feature type="disulfide bond" evidence="1">
    <location>
        <begin position="874"/>
        <end position="890"/>
    </location>
</feature>
<feature type="disulfide bond" evidence="1">
    <location>
        <begin position="892"/>
        <end position="903"/>
    </location>
</feature>
<feature type="disulfide bond" evidence="1">
    <location>
        <begin position="909"/>
        <end position="923"/>
    </location>
</feature>
<feature type="disulfide bond" evidence="1">
    <location>
        <begin position="917"/>
        <end position="933"/>
    </location>
</feature>
<feature type="disulfide bond" evidence="1">
    <location>
        <begin position="935"/>
        <end position="946"/>
    </location>
</feature>
<feature type="disulfide bond" evidence="1">
    <location>
        <begin position="952"/>
        <end position="965"/>
    </location>
</feature>
<feature type="disulfide bond" evidence="1">
    <location>
        <begin position="959"/>
        <end position="975"/>
    </location>
</feature>
<feature type="disulfide bond" evidence="1">
    <location>
        <begin position="1333"/>
        <end position="1347"/>
    </location>
</feature>
<feature type="disulfide bond" evidence="1">
    <location>
        <begin position="1341"/>
        <end position="1357"/>
    </location>
</feature>
<feature type="disulfide bond" evidence="1">
    <location>
        <begin position="1359"/>
        <end position="1368"/>
    </location>
</feature>
<feature type="disulfide bond" evidence="1">
    <location>
        <begin position="1380"/>
        <end position="1391"/>
    </location>
</feature>
<feature type="disulfide bond" evidence="1">
    <location>
        <begin position="1384"/>
        <end position="1401"/>
    </location>
</feature>
<feature type="disulfide bond" evidence="1">
    <location>
        <begin position="1403"/>
        <end position="1412"/>
    </location>
</feature>
<feature type="disulfide bond" evidence="1">
    <location>
        <begin position="1421"/>
        <end position="1431"/>
    </location>
</feature>
<feature type="disulfide bond" evidence="1">
    <location>
        <begin position="1425"/>
        <end position="1441"/>
    </location>
</feature>
<feature type="disulfide bond" evidence="1">
    <location>
        <begin position="1443"/>
        <end position="1454"/>
    </location>
</feature>
<feature type="disulfide bond" evidence="1">
    <location>
        <begin position="1460"/>
        <end position="1473"/>
    </location>
</feature>
<feature type="disulfide bond" evidence="1">
    <location>
        <begin position="1467"/>
        <end position="1483"/>
    </location>
</feature>
<feature type="disulfide bond" evidence="1">
    <location>
        <begin position="1485"/>
        <end position="1496"/>
    </location>
</feature>
<feature type="disulfide bond" evidence="1">
    <location>
        <begin position="1502"/>
        <end position="1515"/>
    </location>
</feature>
<feature type="disulfide bond" evidence="1">
    <location>
        <begin position="1509"/>
        <end position="1525"/>
    </location>
</feature>
<feature type="disulfide bond" evidence="1">
    <location>
        <begin position="1527"/>
        <end position="1539"/>
    </location>
</feature>
<feature type="disulfide bond" evidence="1">
    <location>
        <begin position="1545"/>
        <end position="1558"/>
    </location>
</feature>
<feature type="disulfide bond" evidence="1">
    <location>
        <begin position="1552"/>
        <end position="1568"/>
    </location>
</feature>
<feature type="disulfide bond" evidence="1">
    <location>
        <begin position="1570"/>
        <end position="1582"/>
    </location>
</feature>
<feature type="disulfide bond" evidence="1">
    <location>
        <begin position="1971"/>
        <end position="1985"/>
    </location>
</feature>
<feature type="disulfide bond" evidence="1">
    <location>
        <begin position="1979"/>
        <end position="1995"/>
    </location>
</feature>
<feature type="disulfide bond" evidence="1">
    <location>
        <begin position="1997"/>
        <end position="2006"/>
    </location>
</feature>
<feature type="disulfide bond" evidence="1">
    <location>
        <begin position="2018"/>
        <end position="2029"/>
    </location>
</feature>
<feature type="disulfide bond" evidence="1">
    <location>
        <begin position="2023"/>
        <end position="2039"/>
    </location>
</feature>
<feature type="disulfide bond" evidence="1">
    <location>
        <begin position="2041"/>
        <end position="2050"/>
    </location>
</feature>
<feature type="disulfide bond" evidence="1">
    <location>
        <begin position="2060"/>
        <end position="2070"/>
    </location>
</feature>
<feature type="disulfide bond" evidence="1">
    <location>
        <begin position="2064"/>
        <end position="2076"/>
    </location>
</feature>
<feature type="disulfide bond" evidence="1">
    <location>
        <begin position="2078"/>
        <end position="2089"/>
    </location>
</feature>
<feature type="disulfide bond" evidence="1">
    <location>
        <begin position="2095"/>
        <end position="2108"/>
    </location>
</feature>
<feature type="disulfide bond" evidence="1">
    <location>
        <begin position="2102"/>
        <end position="2117"/>
    </location>
</feature>
<feature type="disulfide bond" evidence="1">
    <location>
        <begin position="2119"/>
        <end position="2130"/>
    </location>
</feature>
<feature type="disulfide bond" evidence="1">
    <location>
        <begin position="2136"/>
        <end position="2150"/>
    </location>
</feature>
<feature type="disulfide bond" evidence="1">
    <location>
        <begin position="2144"/>
        <end position="2160"/>
    </location>
</feature>
<feature type="disulfide bond" evidence="1">
    <location>
        <begin position="2162"/>
        <end position="2173"/>
    </location>
</feature>
<feature type="disulfide bond" evidence="1">
    <location>
        <begin position="2230"/>
        <end position="2299"/>
    </location>
</feature>
<feature type="disulfide bond" evidence="1">
    <location>
        <begin position="2254"/>
        <end position="2275"/>
    </location>
</feature>
<feature type="splice variant" id="VSP_050766" description="In isoform 2." evidence="6">
    <original>TLSGPDLELHASNATFLSINASR</original>
    <variation>VTAGPWAVCSSAVGPTQQVLLCS</variation>
    <location>
        <begin position="2381"/>
        <end position="2403"/>
    </location>
</feature>
<feature type="splice variant" id="VSP_050767" description="In isoform 2." evidence="6">
    <location>
        <begin position="2405"/>
        <end position="2571"/>
    </location>
</feature>
<sequence length="2571" mass="276257">MAEPRTLLLLCVLVLCLSDSSFIRGQTVRSKRCDIHTKFVTHTPCTACAAIRRQLCPWGWSRNFPEKILLDCRYELQLRGAAISLSGCSQECWKDVVQKACCPGYWGSQCFECPGGPATPCSGHGTCLDGIEGNGTCVCQGNFSGSVCQECRDPNRFGPDCQSVCNCVHGVCSHGPRGDGSCRCFAGYTGPHCDQELPVCQSLKCPQNSQCSAEAPTCKCLPGYTQQDNVCLAPDPCQPSACSPLARCSVTPQGQAQCQCPENYHGDGKVCLPRDPCLTNFGGCPSNSTFCLYRGPGKATCMCRPGMTSINNNASEGCHVSCKPHSCDRSATCQVTPDRKTSCVCKNDEVGDGHACYGHLLHEVRRANQNGLVFLRLRAAIAMLEQGCQEILTTSGPFTVLVPSMFSVSSVSSNMNATLAQQLCRQHVIAGEHMLENAGPPSTRRWWTLAGQEVTITFKNMRYAYKYEDQPQQFSIHKANYIAANGVFHTVTALRWQLPPPLPGDSKKTVGQILASTEVFTRFETILENCGLPSILDGPGPFTVFAPSNEAVDSLRDGRLIYLFTAGLSKLQELVRYHIYNHGQLTVEKLISKGRVLTMANQVLTVNISEGGRILLGPGGIPVRRVDVPAANGVIHMLEGILLPPTILPILPKHCDEEQHQTVLGSCVDCQALNTSVCPPNSVKMDIFPKECVYIHDPNGLNVLKKGCADYCNQTITKRGCCKGFFGPDCTQCPGGFSNPCYGKGNCSDGVRGNGACLCFPDYKGIACHICSDPKKHGEQCQEDCGCVHGLCDNRPGSGGVCQQGTCAPGFQGRFCNESMGNCGSTGLAQPCHSDAHCVIQEGVARCVCHDGFEGNGFSCKRSNPCSRPDRGGCSENAECVPGDLGTHHCICHKGWSGDGRICVAIDECGLDTRGGCHADALCSYVGPGQSRCTCKLGFAGNGYECSPIDPCRVGNGGCHGLATCKAVGGGQRVCTCPPHFGGDGFSCYGDIIQELEANAHFSAFSQWFKNSSITLPADSRVTALVPSESAIRRLSLEDQAFWLQPKMLPELARAHFLQGAFSEEELARLNGQQVATLSATTRWQIHNISGKVWVQNATVDVPDLLATNGILHIVSQVLLPPRGDMQTGPGLLQQLDSVPAFRLFGEQLKHHKLVAQIEAAKAYTIFVPTNHSLETQGNNSVLGIDTVRHHVILGEALSVEVLRKGGHRNSLLGPAHWLVFYNHSGQPEVNHMPLEGPLLEAPGSSLFGLSGILAVGSSRCLHSHAEALREKCINCTRKFRCTQGFQLQDTPRKSCVYRSGLSFSRGCSYTCAKKIQVPDCCPGFFGTLCEPCPGGLGGVCSGHGQCQDRFLGNGECRCQEGFHGTACEMCELGRYGPTCSGVCDCDHGLCQEGLRGNGSCVCHAGWQGLRCDQKITDHQCPKKCDPNANCIQDSAGIPACVCAAGYSGNGSYCSEVDPCASGHGGCSPYANCTKVAPGQRTCTCQDGYTGDGELCQEINSCLVHNGGCHVHAECIPTGPQQVSCSCREGYSGDGIQTCKLLDPCSQNNGGCSPYAVCKSTGDGQRTCSCDATHTVGDGITCHGRVGLELLRNKYASFFSLHLLEYKELKGDGPFTVFVPHADLISNMSQDELARIRAHRQLVFRYHVVGCRKLWSQEMLDQGYITTLSGHTLRVSEREGSIYLNDFARVVSSDLEVVNGVLHFIDHVLLPPDVLHWESGAIPIPQRNVTAAAESFGYKIFSRLLTVAGLLPMLQDASHRPFTMLWPTDSALQALPPDRKNWLFHEDHRDKLAAILRGHMIRNIEALASDLPNLGQLRTMHGNTISFSCGLTRPGELIVGEDEAHIVQRHLTFEGGLAYGIDQLLEPPDLGARCDRFEPQPLQMKTCSICGLEPPCPRGSREQGSPETCWRHYSKFWTTPLHSISMRGAYWIPSSFWNRNHMSRGCHRNCVTTVWKPSCCPGHYGINCHACPGGPRSPCSDHGVCLDGIRGSGQCNCHPGFAGTACELCAPGAFGPQCQACRCTQHGRCDEGLGGSGSCFCDEGWTGARCEVQLELQPVCTPPCAPQAVCRLGNSCECSLGYEGDGRVCTVADLCQKGHGGCSKHANCSQVGTVVTCTCLPDYEGDGWSCRARDPCLDGHRGGCSEHADCLNTGPNTRRCECHVGYVGDGLQCLEELEPPVDRCLGGSSPCHTDALCTDLHFQEKQAGVFHIQATSGPYGLTFSEAKEACEGQGAVLASLPQLSAAQQLGFHVCFVGWLANGSAAHPVVTPAADCGNNRVGVVSLGVRKNLSELWDAYCYRVQDVACQCRAGFVGDGISTCNGKLLDVLAATANFSTFYGMLLGYANATQRGLEFMDFLEDELTYKTLFVPVNKGFVDNMTLSGPDLELHASNATFLSINASRGTLLPAHSGLSLFISDTGPDNTSLVPLAPGAVVVSHVIVWDIMAFNGIIHALASPLLMPPQTRAVLGSEPPPVALSLGVVVTSGTLLGLVAGALYLRARGKPPGFSFSAFQAEDNADDDFSPWQEGTSPTLVSVPNPVFGSSDIFCEPFDDSVLEEDFPDTQRVLKVK</sequence>
<proteinExistence type="evidence at protein level"/>
<dbReference type="EMBL" id="AF290914">
    <property type="protein sequence ID" value="AAL91671.2"/>
    <property type="molecule type" value="mRNA"/>
</dbReference>
<dbReference type="EMBL" id="BC031166">
    <property type="protein sequence ID" value="AAH31166.1"/>
    <property type="molecule type" value="mRNA"/>
</dbReference>
<dbReference type="EMBL" id="BC022136">
    <property type="protein sequence ID" value="AAH22136.1"/>
    <property type="molecule type" value="mRNA"/>
</dbReference>
<dbReference type="CCDS" id="CCDS26906.1">
    <molecule id="Q8R4Y4-1"/>
</dbReference>
<dbReference type="SMR" id="Q8R4Y4"/>
<dbReference type="FunCoup" id="Q8R4Y4">
    <property type="interactions" value="331"/>
</dbReference>
<dbReference type="STRING" id="10090.ENSMUSP00000046199"/>
<dbReference type="GlyCosmos" id="Q8R4Y4">
    <property type="glycosylation" value="31 sites, No reported glycans"/>
</dbReference>
<dbReference type="GlyGen" id="Q8R4Y4">
    <property type="glycosylation" value="34 sites, 11 N-linked glycans (12 sites), 1 O-linked glycan (2 sites)"/>
</dbReference>
<dbReference type="iPTMnet" id="Q8R4Y4"/>
<dbReference type="PhosphoSitePlus" id="Q8R4Y4"/>
<dbReference type="SwissPalm" id="Q8R4Y4"/>
<dbReference type="jPOST" id="Q8R4Y4"/>
<dbReference type="PaxDb" id="10090-ENSMUSP00000046199"/>
<dbReference type="ProteomicsDB" id="257444">
    <molecule id="Q8R4Y4-1"/>
</dbReference>
<dbReference type="ProteomicsDB" id="257445">
    <molecule id="Q8R4Y4-2"/>
</dbReference>
<dbReference type="AGR" id="MGI:2178742"/>
<dbReference type="MGI" id="MGI:2178742">
    <property type="gene designation" value="Stab1"/>
</dbReference>
<dbReference type="eggNOG" id="KOG1218">
    <property type="taxonomic scope" value="Eukaryota"/>
</dbReference>
<dbReference type="InParanoid" id="Q8R4Y4"/>
<dbReference type="PhylomeDB" id="Q8R4Y4"/>
<dbReference type="Reactome" id="R-MMU-3000497">
    <property type="pathway name" value="Scavenging by Class H Receptors"/>
</dbReference>
<dbReference type="ChiTaRS" id="Stab1">
    <property type="organism name" value="mouse"/>
</dbReference>
<dbReference type="PRO" id="PR:Q8R4Y4"/>
<dbReference type="Proteomes" id="UP000000589">
    <property type="component" value="Unplaced"/>
</dbReference>
<dbReference type="RNAct" id="Q8R4Y4">
    <property type="molecule type" value="protein"/>
</dbReference>
<dbReference type="GO" id="GO:0005737">
    <property type="term" value="C:cytoplasm"/>
    <property type="evidence" value="ECO:0000266"/>
    <property type="project" value="MGI"/>
</dbReference>
<dbReference type="GO" id="GO:0005886">
    <property type="term" value="C:plasma membrane"/>
    <property type="evidence" value="ECO:0000250"/>
    <property type="project" value="UniProtKB"/>
</dbReference>
<dbReference type="GO" id="GO:0005509">
    <property type="term" value="F:calcium ion binding"/>
    <property type="evidence" value="ECO:0007669"/>
    <property type="project" value="InterPro"/>
</dbReference>
<dbReference type="GO" id="GO:0005540">
    <property type="term" value="F:hyaluronic acid binding"/>
    <property type="evidence" value="ECO:0007669"/>
    <property type="project" value="InterPro"/>
</dbReference>
<dbReference type="GO" id="GO:0030169">
    <property type="term" value="F:low-density lipoprotein particle binding"/>
    <property type="evidence" value="ECO:0000250"/>
    <property type="project" value="UniProtKB"/>
</dbReference>
<dbReference type="GO" id="GO:0005041">
    <property type="term" value="F:low-density lipoprotein particle receptor activity"/>
    <property type="evidence" value="ECO:0000250"/>
    <property type="project" value="UniProtKB"/>
</dbReference>
<dbReference type="GO" id="GO:0005044">
    <property type="term" value="F:scavenger receptor activity"/>
    <property type="evidence" value="ECO:0000250"/>
    <property type="project" value="UniProtKB"/>
</dbReference>
<dbReference type="GO" id="GO:0007155">
    <property type="term" value="P:cell adhesion"/>
    <property type="evidence" value="ECO:0007669"/>
    <property type="project" value="InterPro"/>
</dbReference>
<dbReference type="GO" id="GO:0007267">
    <property type="term" value="P:cell-cell signaling"/>
    <property type="evidence" value="ECO:0000250"/>
    <property type="project" value="UniProtKB"/>
</dbReference>
<dbReference type="GO" id="GO:0042742">
    <property type="term" value="P:defense response to bacterium"/>
    <property type="evidence" value="ECO:0000250"/>
    <property type="project" value="UniProtKB"/>
</dbReference>
<dbReference type="GO" id="GO:0006954">
    <property type="term" value="P:inflammatory response"/>
    <property type="evidence" value="ECO:0007669"/>
    <property type="project" value="UniProtKB-KW"/>
</dbReference>
<dbReference type="GO" id="GO:0016525">
    <property type="term" value="P:negative regulation of angiogenesis"/>
    <property type="evidence" value="ECO:0000250"/>
    <property type="project" value="UniProtKB"/>
</dbReference>
<dbReference type="CDD" id="cd00055">
    <property type="entry name" value="EGF_Lam"/>
    <property type="match status" value="1"/>
</dbReference>
<dbReference type="FunFam" id="3.10.100.10:FF:000001">
    <property type="entry name" value="Hyaluronan proteoglycan link protein 1"/>
    <property type="match status" value="1"/>
</dbReference>
<dbReference type="FunFam" id="2.30.180.10:FF:000014">
    <property type="entry name" value="Stabilin 1"/>
    <property type="match status" value="1"/>
</dbReference>
<dbReference type="FunFam" id="2.30.180.10:FF:000030">
    <property type="entry name" value="Stabilin 1"/>
    <property type="match status" value="1"/>
</dbReference>
<dbReference type="FunFam" id="2.10.25.10:FF:000040">
    <property type="entry name" value="Stabilin 2"/>
    <property type="match status" value="4"/>
</dbReference>
<dbReference type="FunFam" id="2.10.25.10:FF:000278">
    <property type="entry name" value="Stabilin 2"/>
    <property type="match status" value="1"/>
</dbReference>
<dbReference type="FunFam" id="2.10.25.10:FF:000817">
    <property type="entry name" value="Stabilin 2"/>
    <property type="match status" value="1"/>
</dbReference>
<dbReference type="FunFam" id="2.30.180.10:FF:000005">
    <property type="entry name" value="Stabilin 2"/>
    <property type="match status" value="2"/>
</dbReference>
<dbReference type="FunFam" id="2.10.25.10:FF:000337">
    <property type="entry name" value="stabilin-1 isoform X1"/>
    <property type="match status" value="1"/>
</dbReference>
<dbReference type="Gene3D" id="2.30.180.10">
    <property type="entry name" value="FAS1 domain"/>
    <property type="match status" value="6"/>
</dbReference>
<dbReference type="Gene3D" id="2.10.25.10">
    <property type="entry name" value="Laminin"/>
    <property type="match status" value="13"/>
</dbReference>
<dbReference type="Gene3D" id="3.10.100.10">
    <property type="entry name" value="Mannose-Binding Protein A, subunit A"/>
    <property type="match status" value="1"/>
</dbReference>
<dbReference type="InterPro" id="IPR016186">
    <property type="entry name" value="C-type_lectin-like/link_sf"/>
</dbReference>
<dbReference type="InterPro" id="IPR016187">
    <property type="entry name" value="CTDL_fold"/>
</dbReference>
<dbReference type="InterPro" id="IPR001881">
    <property type="entry name" value="EGF-like_Ca-bd_dom"/>
</dbReference>
<dbReference type="InterPro" id="IPR000742">
    <property type="entry name" value="EGF-like_dom"/>
</dbReference>
<dbReference type="InterPro" id="IPR024731">
    <property type="entry name" value="EGF_dom"/>
</dbReference>
<dbReference type="InterPro" id="IPR056806">
    <property type="entry name" value="EGF_STAB1-2"/>
</dbReference>
<dbReference type="InterPro" id="IPR036378">
    <property type="entry name" value="FAS1_dom_sf"/>
</dbReference>
<dbReference type="InterPro" id="IPR000782">
    <property type="entry name" value="FAS1_domain"/>
</dbReference>
<dbReference type="InterPro" id="IPR002049">
    <property type="entry name" value="LE_dom"/>
</dbReference>
<dbReference type="InterPro" id="IPR000538">
    <property type="entry name" value="Link_dom"/>
</dbReference>
<dbReference type="PANTHER" id="PTHR24038">
    <property type="entry name" value="STABILIN"/>
    <property type="match status" value="1"/>
</dbReference>
<dbReference type="PANTHER" id="PTHR24038:SF8">
    <property type="entry name" value="STABILIN-1"/>
    <property type="match status" value="1"/>
</dbReference>
<dbReference type="Pfam" id="PF12947">
    <property type="entry name" value="EGF_3"/>
    <property type="match status" value="6"/>
</dbReference>
<dbReference type="Pfam" id="PF24887">
    <property type="entry name" value="EGF_STAB1-2"/>
    <property type="match status" value="2"/>
</dbReference>
<dbReference type="Pfam" id="PF02469">
    <property type="entry name" value="Fasciclin"/>
    <property type="match status" value="5"/>
</dbReference>
<dbReference type="Pfam" id="PF00193">
    <property type="entry name" value="Xlink"/>
    <property type="match status" value="1"/>
</dbReference>
<dbReference type="SMART" id="SM00181">
    <property type="entry name" value="EGF"/>
    <property type="match status" value="23"/>
</dbReference>
<dbReference type="SMART" id="SM00179">
    <property type="entry name" value="EGF_CA"/>
    <property type="match status" value="7"/>
</dbReference>
<dbReference type="SMART" id="SM00180">
    <property type="entry name" value="EGF_Lam"/>
    <property type="match status" value="4"/>
</dbReference>
<dbReference type="SMART" id="SM00554">
    <property type="entry name" value="FAS1"/>
    <property type="match status" value="6"/>
</dbReference>
<dbReference type="SMART" id="SM00445">
    <property type="entry name" value="LINK"/>
    <property type="match status" value="1"/>
</dbReference>
<dbReference type="SUPFAM" id="SSF56436">
    <property type="entry name" value="C-type lectin-like"/>
    <property type="match status" value="1"/>
</dbReference>
<dbReference type="SUPFAM" id="SSF57196">
    <property type="entry name" value="EGF/Laminin"/>
    <property type="match status" value="1"/>
</dbReference>
<dbReference type="SUPFAM" id="SSF82153">
    <property type="entry name" value="FAS1 domain"/>
    <property type="match status" value="7"/>
</dbReference>
<dbReference type="PROSITE" id="PS00022">
    <property type="entry name" value="EGF_1"/>
    <property type="match status" value="7"/>
</dbReference>
<dbReference type="PROSITE" id="PS01186">
    <property type="entry name" value="EGF_2"/>
    <property type="match status" value="15"/>
</dbReference>
<dbReference type="PROSITE" id="PS50026">
    <property type="entry name" value="EGF_3"/>
    <property type="match status" value="20"/>
</dbReference>
<dbReference type="PROSITE" id="PS01248">
    <property type="entry name" value="EGF_LAM_1"/>
    <property type="match status" value="2"/>
</dbReference>
<dbReference type="PROSITE" id="PS50213">
    <property type="entry name" value="FAS1"/>
    <property type="match status" value="7"/>
</dbReference>
<dbReference type="PROSITE" id="PS01241">
    <property type="entry name" value="LINK_1"/>
    <property type="match status" value="1"/>
</dbReference>
<dbReference type="PROSITE" id="PS50963">
    <property type="entry name" value="LINK_2"/>
    <property type="match status" value="1"/>
</dbReference>
<evidence type="ECO:0000250" key="1"/>
<evidence type="ECO:0000255" key="2"/>
<evidence type="ECO:0000255" key="3">
    <source>
        <dbReference type="PROSITE-ProRule" id="PRU00076"/>
    </source>
</evidence>
<evidence type="ECO:0000255" key="4">
    <source>
        <dbReference type="PROSITE-ProRule" id="PRU00082"/>
    </source>
</evidence>
<evidence type="ECO:0000255" key="5">
    <source>
        <dbReference type="PROSITE-ProRule" id="PRU00323"/>
    </source>
</evidence>
<evidence type="ECO:0000303" key="6">
    <source>
    </source>
</evidence>
<evidence type="ECO:0000305" key="7"/>
<evidence type="ECO:0000312" key="8">
    <source>
        <dbReference type="EMBL" id="AAH22136.1"/>
    </source>
</evidence>
<evidence type="ECO:0000312" key="9">
    <source>
        <dbReference type="EMBL" id="AAH31166.1"/>
    </source>
</evidence>
<evidence type="ECO:0000312" key="10">
    <source>
        <dbReference type="EMBL" id="AAL91671.2"/>
    </source>
</evidence>
<name>STAB1_MOUSE</name>
<organism evidence="10">
    <name type="scientific">Mus musculus</name>
    <name type="common">Mouse</name>
    <dbReference type="NCBI Taxonomy" id="10090"/>
    <lineage>
        <taxon>Eukaryota</taxon>
        <taxon>Metazoa</taxon>
        <taxon>Chordata</taxon>
        <taxon>Craniata</taxon>
        <taxon>Vertebrata</taxon>
        <taxon>Euteleostomi</taxon>
        <taxon>Mammalia</taxon>
        <taxon>Eutheria</taxon>
        <taxon>Euarchontoglires</taxon>
        <taxon>Glires</taxon>
        <taxon>Rodentia</taxon>
        <taxon>Myomorpha</taxon>
        <taxon>Muroidea</taxon>
        <taxon>Muridae</taxon>
        <taxon>Murinae</taxon>
        <taxon>Mus</taxon>
        <taxon>Mus</taxon>
    </lineage>
</organism>
<reference evidence="7" key="1">
    <citation type="journal article" date="2002" name="Biochem. J.">
        <title>Stabilin-1 and -2 constitute a novel family of fasciclin-like hyaluronan receptor homologues.</title>
        <authorList>
            <person name="Politz O."/>
            <person name="Gratchev A."/>
            <person name="McCourt P.A.G."/>
            <person name="Schledzewski K."/>
            <person name="Guillot P."/>
            <person name="Johansson S."/>
            <person name="Svineng G."/>
            <person name="Franke P."/>
            <person name="Kannicht C."/>
            <person name="Kzhyshkowska J."/>
            <person name="Longati P."/>
            <person name="Velten F.W."/>
            <person name="Johansson S."/>
            <person name="Goerdt S."/>
        </authorList>
    </citation>
    <scope>NUCLEOTIDE SEQUENCE [MRNA] (ISOFORM 1)</scope>
    <source>
        <strain evidence="10">BALB/cJ</strain>
        <tissue evidence="10">Liver</tissue>
    </source>
</reference>
<reference key="2">
    <citation type="submission" date="2009-01" db="UniProtKB">
        <authorList>
            <person name="Lubec G."/>
            <person name="Sunyer B."/>
            <person name="Chen W.-Q."/>
        </authorList>
    </citation>
    <scope>PROTEIN SEQUENCE OF 560-570</scope>
    <scope>IDENTIFICATION BY MASS SPECTROMETRY</scope>
    <source>
        <strain>OF1</strain>
        <tissue>Hippocampus</tissue>
    </source>
</reference>
<reference evidence="7" key="3">
    <citation type="journal article" date="2004" name="Genome Res.">
        <title>The status, quality, and expansion of the NIH full-length cDNA project: the Mammalian Gene Collection (MGC).</title>
        <authorList>
            <consortium name="The MGC Project Team"/>
        </authorList>
    </citation>
    <scope>NUCLEOTIDE SEQUENCE [LARGE SCALE MRNA] OF 1334-2571 (ISOFORM 1)</scope>
    <scope>NUCLEOTIDE SEQUENCE [LARGE SCALE MRNA] OF 2230-2571 (ISOFORM 2)</scope>
    <source>
        <tissue evidence="9">Colon</tissue>
        <tissue evidence="8">Liver</tissue>
    </source>
</reference>
<reference key="4">
    <citation type="journal article" date="2010" name="Cell">
        <title>A tissue-specific atlas of mouse protein phosphorylation and expression.</title>
        <authorList>
            <person name="Huttlin E.L."/>
            <person name="Jedrychowski M.P."/>
            <person name="Elias J.E."/>
            <person name="Goswami T."/>
            <person name="Rad R."/>
            <person name="Beausoleil S.A."/>
            <person name="Villen J."/>
            <person name="Haas W."/>
            <person name="Sowa M.E."/>
            <person name="Gygi S.P."/>
        </authorList>
    </citation>
    <scope>IDENTIFICATION BY MASS SPECTROMETRY [LARGE SCALE ANALYSIS]</scope>
    <source>
        <tissue>Brown adipose tissue</tissue>
        <tissue>Heart</tissue>
        <tissue>Kidney</tissue>
        <tissue>Liver</tissue>
        <tissue>Lung</tissue>
        <tissue>Pancreas</tissue>
        <tissue>Spleen</tissue>
        <tissue>Testis</tissue>
    </source>
</reference>
<keyword id="KW-0025">Alternative splicing</keyword>
<keyword id="KW-0903">Direct protein sequencing</keyword>
<keyword id="KW-1015">Disulfide bond</keyword>
<keyword id="KW-0245">EGF-like domain</keyword>
<keyword id="KW-0325">Glycoprotein</keyword>
<keyword id="KW-0395">Inflammatory response</keyword>
<keyword id="KW-0424">Laminin EGF-like domain</keyword>
<keyword id="KW-0472">Membrane</keyword>
<keyword id="KW-0675">Receptor</keyword>
<keyword id="KW-1185">Reference proteome</keyword>
<keyword id="KW-0677">Repeat</keyword>
<keyword id="KW-0732">Signal</keyword>
<keyword id="KW-0812">Transmembrane</keyword>
<keyword id="KW-1133">Transmembrane helix</keyword>
<comment type="function">
    <text evidence="1">Acts as a scavenger receptor for acetylated low density lipoprotein. Binds to both Gram-positive and Gram-negative bacteria and may play a role in defense against bacterial infection. When inhibited in endothelial tube formation assays, there is a marked decrease in cell-cell interactions, suggesting a role in angiogenesis. Involved in the delivery of newly synthesized CHID1/SI-CLP from the biosynthetic compartment to the endosomal/lysosomal system (By similarity).</text>
</comment>
<comment type="subunit">
    <text evidence="1">Interacts with CHID1.</text>
</comment>
<comment type="subcellular location">
    <subcellularLocation>
        <location evidence="7">Membrane</location>
        <topology evidence="7">Single-pass type I membrane protein</topology>
    </subcellularLocation>
</comment>
<comment type="alternative products">
    <event type="alternative splicing"/>
    <isoform>
        <id>Q8R4Y4-1</id>
        <name evidence="7">1</name>
        <sequence type="displayed"/>
    </isoform>
    <isoform>
        <id>Q8R4Y4-2</id>
        <name evidence="7">2</name>
        <sequence type="described" ref="VSP_050766 VSP_050767"/>
    </isoform>
</comment>